<protein>
    <recommendedName>
        <fullName evidence="1">tRNA pseudouridine synthase D</fullName>
        <ecNumber evidence="1">5.4.99.27</ecNumber>
    </recommendedName>
    <alternativeName>
        <fullName evidence="1">tRNA pseudouridine(13) synthase</fullName>
    </alternativeName>
    <alternativeName>
        <fullName evidence="1">tRNA pseudouridylate synthase D</fullName>
    </alternativeName>
    <alternativeName>
        <fullName evidence="1">tRNA-uridine isomerase D</fullName>
    </alternativeName>
</protein>
<feature type="chain" id="PRO_1000136853" description="tRNA pseudouridine synthase D">
    <location>
        <begin position="1"/>
        <end position="349"/>
    </location>
</feature>
<feature type="domain" description="TRUD" evidence="1">
    <location>
        <begin position="155"/>
        <end position="303"/>
    </location>
</feature>
<feature type="active site" description="Nucleophile" evidence="1">
    <location>
        <position position="80"/>
    </location>
</feature>
<feature type="binding site" evidence="1">
    <location>
        <position position="27"/>
    </location>
    <ligand>
        <name>substrate</name>
    </ligand>
</feature>
<feature type="binding site" evidence="1">
    <location>
        <position position="129"/>
    </location>
    <ligand>
        <name>substrate</name>
    </ligand>
</feature>
<feature type="binding site" evidence="1">
    <location>
        <position position="329"/>
    </location>
    <ligand>
        <name>substrate</name>
    </ligand>
</feature>
<gene>
    <name evidence="1" type="primary">truD</name>
    <name type="ordered locus">SSPA2596</name>
</gene>
<evidence type="ECO:0000255" key="1">
    <source>
        <dbReference type="HAMAP-Rule" id="MF_01082"/>
    </source>
</evidence>
<sequence>MTEFDNLTWLHGKPQGSGLLKANPEDFVVVEDLGFTPDGEGEHILLRILKNGCNTRFVADALAKFLKIHAREVSFAGQKDKHAVTEQWLCARVPGKEMPDFSAFQLEGCKVLEYARHKRKLRLGALKGNAFTLVLREISDRRDVETRLQAIRDGGVPNYFGAQRFGIGGSNLQGALRWAQSNAPVRDRNKRSFWLSAARSALFNQIVHQRLKKPDFNQVVDGDALQLAGRGSWFVATSEELPELQRRVDEKELMITASLPGSGEWGTQRAALAFEQDAIAQETVLQSLLLREKVEASRRAMLLYPQQLSWNWWDDVTVELRFWLPAGSFATSVVRELINTMGDYAHIAE</sequence>
<organism>
    <name type="scientific">Salmonella paratyphi A (strain AKU_12601)</name>
    <dbReference type="NCBI Taxonomy" id="554290"/>
    <lineage>
        <taxon>Bacteria</taxon>
        <taxon>Pseudomonadati</taxon>
        <taxon>Pseudomonadota</taxon>
        <taxon>Gammaproteobacteria</taxon>
        <taxon>Enterobacterales</taxon>
        <taxon>Enterobacteriaceae</taxon>
        <taxon>Salmonella</taxon>
    </lineage>
</organism>
<name>TRUD_SALPK</name>
<reference key="1">
    <citation type="journal article" date="2009" name="BMC Genomics">
        <title>Pseudogene accumulation in the evolutionary histories of Salmonella enterica serovars Paratyphi A and Typhi.</title>
        <authorList>
            <person name="Holt K.E."/>
            <person name="Thomson N.R."/>
            <person name="Wain J."/>
            <person name="Langridge G.C."/>
            <person name="Hasan R."/>
            <person name="Bhutta Z.A."/>
            <person name="Quail M.A."/>
            <person name="Norbertczak H."/>
            <person name="Walker D."/>
            <person name="Simmonds M."/>
            <person name="White B."/>
            <person name="Bason N."/>
            <person name="Mungall K."/>
            <person name="Dougan G."/>
            <person name="Parkhill J."/>
        </authorList>
    </citation>
    <scope>NUCLEOTIDE SEQUENCE [LARGE SCALE GENOMIC DNA]</scope>
    <source>
        <strain>AKU_12601</strain>
    </source>
</reference>
<accession>B5BEY2</accession>
<proteinExistence type="inferred from homology"/>
<comment type="function">
    <text evidence="1">Responsible for synthesis of pseudouridine from uracil-13 in transfer RNAs.</text>
</comment>
<comment type="catalytic activity">
    <reaction evidence="1">
        <text>uridine(13) in tRNA = pseudouridine(13) in tRNA</text>
        <dbReference type="Rhea" id="RHEA:42540"/>
        <dbReference type="Rhea" id="RHEA-COMP:10105"/>
        <dbReference type="Rhea" id="RHEA-COMP:10106"/>
        <dbReference type="ChEBI" id="CHEBI:65314"/>
        <dbReference type="ChEBI" id="CHEBI:65315"/>
        <dbReference type="EC" id="5.4.99.27"/>
    </reaction>
</comment>
<comment type="similarity">
    <text evidence="1">Belongs to the pseudouridine synthase TruD family.</text>
</comment>
<dbReference type="EC" id="5.4.99.27" evidence="1"/>
<dbReference type="EMBL" id="FM200053">
    <property type="protein sequence ID" value="CAR60834.1"/>
    <property type="molecule type" value="Genomic_DNA"/>
</dbReference>
<dbReference type="RefSeq" id="WP_000134246.1">
    <property type="nucleotide sequence ID" value="NC_011147.1"/>
</dbReference>
<dbReference type="SMR" id="B5BEY2"/>
<dbReference type="KEGG" id="sek:SSPA2596"/>
<dbReference type="HOGENOM" id="CLU_005281_4_0_6"/>
<dbReference type="Proteomes" id="UP000001869">
    <property type="component" value="Chromosome"/>
</dbReference>
<dbReference type="GO" id="GO:0005829">
    <property type="term" value="C:cytosol"/>
    <property type="evidence" value="ECO:0007669"/>
    <property type="project" value="TreeGrafter"/>
</dbReference>
<dbReference type="GO" id="GO:0003723">
    <property type="term" value="F:RNA binding"/>
    <property type="evidence" value="ECO:0007669"/>
    <property type="project" value="InterPro"/>
</dbReference>
<dbReference type="GO" id="GO:0160150">
    <property type="term" value="F:tRNA pseudouridine(13) synthase activity"/>
    <property type="evidence" value="ECO:0007669"/>
    <property type="project" value="UniProtKB-EC"/>
</dbReference>
<dbReference type="GO" id="GO:0031119">
    <property type="term" value="P:tRNA pseudouridine synthesis"/>
    <property type="evidence" value="ECO:0007669"/>
    <property type="project" value="UniProtKB-UniRule"/>
</dbReference>
<dbReference type="CDD" id="cd02575">
    <property type="entry name" value="PseudoU_synth_EcTruD"/>
    <property type="match status" value="1"/>
</dbReference>
<dbReference type="FunFam" id="3.30.2340.10:FF:000001">
    <property type="entry name" value="tRNA pseudouridine synthase D"/>
    <property type="match status" value="1"/>
</dbReference>
<dbReference type="FunFam" id="3.30.2350.20:FF:000001">
    <property type="entry name" value="tRNA pseudouridine synthase D"/>
    <property type="match status" value="1"/>
</dbReference>
<dbReference type="Gene3D" id="3.30.2350.20">
    <property type="entry name" value="TruD, catalytic domain"/>
    <property type="match status" value="1"/>
</dbReference>
<dbReference type="Gene3D" id="3.30.2340.10">
    <property type="entry name" value="TruD, insertion domain"/>
    <property type="match status" value="1"/>
</dbReference>
<dbReference type="HAMAP" id="MF_01082">
    <property type="entry name" value="TruD"/>
    <property type="match status" value="1"/>
</dbReference>
<dbReference type="InterPro" id="IPR020103">
    <property type="entry name" value="PsdUridine_synth_cat_dom_sf"/>
</dbReference>
<dbReference type="InterPro" id="IPR001656">
    <property type="entry name" value="PsdUridine_synth_TruD"/>
</dbReference>
<dbReference type="InterPro" id="IPR020119">
    <property type="entry name" value="PsdUridine_synth_TruD_CS"/>
</dbReference>
<dbReference type="InterPro" id="IPR011760">
    <property type="entry name" value="PsdUridine_synth_TruD_insert"/>
</dbReference>
<dbReference type="InterPro" id="IPR042214">
    <property type="entry name" value="TruD_catalytic"/>
</dbReference>
<dbReference type="InterPro" id="IPR043165">
    <property type="entry name" value="TruD_insert_sf"/>
</dbReference>
<dbReference type="InterPro" id="IPR050170">
    <property type="entry name" value="TruD_pseudoU_synthase"/>
</dbReference>
<dbReference type="NCBIfam" id="NF002155">
    <property type="entry name" value="PRK00984.1-4"/>
    <property type="match status" value="1"/>
</dbReference>
<dbReference type="NCBIfam" id="TIGR00094">
    <property type="entry name" value="tRNA_TruD_broad"/>
    <property type="match status" value="1"/>
</dbReference>
<dbReference type="PANTHER" id="PTHR47811">
    <property type="entry name" value="TRNA PSEUDOURIDINE SYNTHASE D"/>
    <property type="match status" value="1"/>
</dbReference>
<dbReference type="PANTHER" id="PTHR47811:SF1">
    <property type="entry name" value="TRNA PSEUDOURIDINE SYNTHASE D"/>
    <property type="match status" value="1"/>
</dbReference>
<dbReference type="Pfam" id="PF01142">
    <property type="entry name" value="TruD"/>
    <property type="match status" value="2"/>
</dbReference>
<dbReference type="SUPFAM" id="SSF55120">
    <property type="entry name" value="Pseudouridine synthase"/>
    <property type="match status" value="1"/>
</dbReference>
<dbReference type="PROSITE" id="PS50984">
    <property type="entry name" value="TRUD"/>
    <property type="match status" value="1"/>
</dbReference>
<dbReference type="PROSITE" id="PS01268">
    <property type="entry name" value="UPF0024"/>
    <property type="match status" value="1"/>
</dbReference>
<keyword id="KW-0413">Isomerase</keyword>
<keyword id="KW-0819">tRNA processing</keyword>